<reference key="1">
    <citation type="journal article" date="2007" name="Photosyn. Res.">
        <title>Complete nucleotide sequence of the freshwater unicellular cyanobacterium Synechococcus elongatus PCC 6301 chromosome: gene content and organization.</title>
        <authorList>
            <person name="Sugita C."/>
            <person name="Ogata K."/>
            <person name="Shikata M."/>
            <person name="Jikuya H."/>
            <person name="Takano J."/>
            <person name="Furumichi M."/>
            <person name="Kanehisa M."/>
            <person name="Omata T."/>
            <person name="Sugiura M."/>
            <person name="Sugita M."/>
        </authorList>
    </citation>
    <scope>NUCLEOTIDE SEQUENCE [LARGE SCALE GENOMIC DNA]</scope>
    <source>
        <strain>ATCC 27144 / PCC 6301 / SAUG 1402/1</strain>
    </source>
</reference>
<reference key="2">
    <citation type="journal article" date="1997" name="Gene">
        <title>Organization of a large gene cluster encoding ribosomal proteins in the cyanobacterium Synechococcus sp. strain PCC 6301: comparison of gene clusters among cyanobacteria, eubacteria and chloroplast genomes.</title>
        <authorList>
            <person name="Sugita M."/>
            <person name="Sugishita H."/>
            <person name="Fujishiro T."/>
            <person name="Tsuboi M."/>
            <person name="Sugita C."/>
            <person name="Endo T."/>
            <person name="Sugiura M."/>
        </authorList>
    </citation>
    <scope>NUCLEOTIDE SEQUENCE [GENOMIC DNA] OF 1-80</scope>
</reference>
<comment type="function">
    <text evidence="1">Formation of pseudouridine at positions 38, 39 and 40 in the anticodon stem and loop of transfer RNAs.</text>
</comment>
<comment type="catalytic activity">
    <reaction evidence="1">
        <text>uridine(38/39/40) in tRNA = pseudouridine(38/39/40) in tRNA</text>
        <dbReference type="Rhea" id="RHEA:22376"/>
        <dbReference type="Rhea" id="RHEA-COMP:10085"/>
        <dbReference type="Rhea" id="RHEA-COMP:10087"/>
        <dbReference type="ChEBI" id="CHEBI:65314"/>
        <dbReference type="ChEBI" id="CHEBI:65315"/>
        <dbReference type="EC" id="5.4.99.12"/>
    </reaction>
</comment>
<comment type="subunit">
    <text evidence="1">Homodimer.</text>
</comment>
<comment type="similarity">
    <text evidence="1">Belongs to the tRNA pseudouridine synthase TruA family.</text>
</comment>
<comment type="sequence caution" evidence="2">
    <conflict type="erroneous initiation">
        <sequence resource="EMBL-CDS" id="BAA22474"/>
    </conflict>
</comment>
<proteinExistence type="inferred from homology"/>
<keyword id="KW-0413">Isomerase</keyword>
<keyword id="KW-0819">tRNA processing</keyword>
<dbReference type="EC" id="5.4.99.12" evidence="1"/>
<dbReference type="EMBL" id="AP008231">
    <property type="protein sequence ID" value="BAD80080.1"/>
    <property type="molecule type" value="Genomic_DNA"/>
</dbReference>
<dbReference type="EMBL" id="AB000111">
    <property type="protein sequence ID" value="BAA22474.1"/>
    <property type="status" value="ALT_INIT"/>
    <property type="molecule type" value="Genomic_DNA"/>
</dbReference>
<dbReference type="RefSeq" id="WP_011244200.1">
    <property type="nucleotide sequence ID" value="NC_006576.1"/>
</dbReference>
<dbReference type="SMR" id="O24712"/>
<dbReference type="KEGG" id="syc:syc1890_d"/>
<dbReference type="eggNOG" id="COG0101">
    <property type="taxonomic scope" value="Bacteria"/>
</dbReference>
<dbReference type="Proteomes" id="UP000001175">
    <property type="component" value="Chromosome"/>
</dbReference>
<dbReference type="GO" id="GO:0003723">
    <property type="term" value="F:RNA binding"/>
    <property type="evidence" value="ECO:0007669"/>
    <property type="project" value="InterPro"/>
</dbReference>
<dbReference type="GO" id="GO:0160147">
    <property type="term" value="F:tRNA pseudouridine(38-40) synthase activity"/>
    <property type="evidence" value="ECO:0007669"/>
    <property type="project" value="UniProtKB-EC"/>
</dbReference>
<dbReference type="GO" id="GO:0031119">
    <property type="term" value="P:tRNA pseudouridine synthesis"/>
    <property type="evidence" value="ECO:0007669"/>
    <property type="project" value="UniProtKB-UniRule"/>
</dbReference>
<dbReference type="CDD" id="cd02570">
    <property type="entry name" value="PseudoU_synth_EcTruA"/>
    <property type="match status" value="1"/>
</dbReference>
<dbReference type="FunFam" id="3.30.70.580:FF:000001">
    <property type="entry name" value="tRNA pseudouridine synthase A"/>
    <property type="match status" value="1"/>
</dbReference>
<dbReference type="Gene3D" id="3.30.70.660">
    <property type="entry name" value="Pseudouridine synthase I, catalytic domain, C-terminal subdomain"/>
    <property type="match status" value="1"/>
</dbReference>
<dbReference type="Gene3D" id="3.30.70.580">
    <property type="entry name" value="Pseudouridine synthase I, catalytic domain, N-terminal subdomain"/>
    <property type="match status" value="1"/>
</dbReference>
<dbReference type="HAMAP" id="MF_00171">
    <property type="entry name" value="TruA"/>
    <property type="match status" value="1"/>
</dbReference>
<dbReference type="InterPro" id="IPR020103">
    <property type="entry name" value="PsdUridine_synth_cat_dom_sf"/>
</dbReference>
<dbReference type="InterPro" id="IPR001406">
    <property type="entry name" value="PsdUridine_synth_TruA"/>
</dbReference>
<dbReference type="InterPro" id="IPR020097">
    <property type="entry name" value="PsdUridine_synth_TruA_a/b_dom"/>
</dbReference>
<dbReference type="InterPro" id="IPR020095">
    <property type="entry name" value="PsdUridine_synth_TruA_C"/>
</dbReference>
<dbReference type="InterPro" id="IPR020094">
    <property type="entry name" value="TruA/RsuA/RluB/E/F_N"/>
</dbReference>
<dbReference type="NCBIfam" id="TIGR00071">
    <property type="entry name" value="hisT_truA"/>
    <property type="match status" value="1"/>
</dbReference>
<dbReference type="PANTHER" id="PTHR11142">
    <property type="entry name" value="PSEUDOURIDYLATE SYNTHASE"/>
    <property type="match status" value="1"/>
</dbReference>
<dbReference type="PANTHER" id="PTHR11142:SF0">
    <property type="entry name" value="TRNA PSEUDOURIDINE SYNTHASE-LIKE 1"/>
    <property type="match status" value="1"/>
</dbReference>
<dbReference type="Pfam" id="PF01416">
    <property type="entry name" value="PseudoU_synth_1"/>
    <property type="match status" value="2"/>
</dbReference>
<dbReference type="PIRSF" id="PIRSF001430">
    <property type="entry name" value="tRNA_psdUrid_synth"/>
    <property type="match status" value="1"/>
</dbReference>
<dbReference type="SUPFAM" id="SSF55120">
    <property type="entry name" value="Pseudouridine synthase"/>
    <property type="match status" value="1"/>
</dbReference>
<organism>
    <name type="scientific">Synechococcus sp. (strain ATCC 27144 / PCC 6301 / SAUG 1402/1)</name>
    <name type="common">Anacystis nidulans</name>
    <dbReference type="NCBI Taxonomy" id="269084"/>
    <lineage>
        <taxon>Bacteria</taxon>
        <taxon>Bacillati</taxon>
        <taxon>Cyanobacteriota</taxon>
        <taxon>Cyanophyceae</taxon>
        <taxon>Synechococcales</taxon>
        <taxon>Synechococcaceae</taxon>
        <taxon>Synechococcus</taxon>
    </lineage>
</organism>
<evidence type="ECO:0000255" key="1">
    <source>
        <dbReference type="HAMAP-Rule" id="MF_00171"/>
    </source>
</evidence>
<evidence type="ECO:0000305" key="2"/>
<name>TRUA_SYNP6</name>
<accession>O24712</accession>
<accession>Q5N0U0</accession>
<gene>
    <name evidence="1" type="primary">truA</name>
    <name type="synonym">hisT</name>
    <name type="ordered locus">syc1890_d</name>
</gene>
<protein>
    <recommendedName>
        <fullName evidence="1">tRNA pseudouridine synthase A</fullName>
        <ecNumber evidence="1">5.4.99.12</ecNumber>
    </recommendedName>
    <alternativeName>
        <fullName evidence="1">tRNA pseudouridine(38-40) synthase</fullName>
    </alternativeName>
    <alternativeName>
        <fullName evidence="1">tRNA pseudouridylate synthase I</fullName>
    </alternativeName>
    <alternativeName>
        <fullName evidence="1">tRNA-uridine isomerase I</fullName>
    </alternativeName>
</protein>
<sequence>MAIAEEPAQAPVIQRIALVIQYLGQGFCGWQRQPRQRSVQGELESAIAAVVGHPVSVQSAGRTDTGVHAAAQVAHFETTSPIPAHRWPSVLNGRLTPDLNIRAAAIVPANWHARFSASYRRYRYTIYTDPCPNLFLNSYVWHYYQAPLCENQMQAALQTLVGYHHLAAFQRSGSKRQHAWVHVQDAWVRRRDSLIEIEVQASGFLYGMIRLLVGLLVQVGEGSRSLESFTDIWVNQRRDRVRHAAPPQGLCLLRIGYPDSPFPVDAWFDTQPLFVLPSSRNDSESLSPCAVSLG</sequence>
<feature type="chain" id="PRO_0000057471" description="tRNA pseudouridine synthase A">
    <location>
        <begin position="1"/>
        <end position="294"/>
    </location>
</feature>
<feature type="active site" description="Nucleophile" evidence="1">
    <location>
        <position position="64"/>
    </location>
</feature>
<feature type="binding site" evidence="1">
    <location>
        <position position="122"/>
    </location>
    <ligand>
        <name>substrate</name>
    </ligand>
</feature>
<feature type="sequence conflict" description="In Ref. 2; BAA22474." evidence="2" ref="2">
    <original>A</original>
    <variation>R</variation>
    <location>
        <position position="69"/>
    </location>
</feature>